<dbReference type="EC" id="2.7.13.3"/>
<dbReference type="EMBL" id="AJ556795">
    <property type="protein sequence ID" value="CAD89115.1"/>
    <property type="molecule type" value="Genomic_DNA"/>
</dbReference>
<dbReference type="EMBL" id="CP000253">
    <property type="protein sequence ID" value="ABD29847.1"/>
    <property type="molecule type" value="Genomic_DNA"/>
</dbReference>
<dbReference type="RefSeq" id="WP_000244412.1">
    <property type="nucleotide sequence ID" value="NZ_LS483365.1"/>
</dbReference>
<dbReference type="RefSeq" id="YP_499273.1">
    <property type="nucleotide sequence ID" value="NC_007795.1"/>
</dbReference>
<dbReference type="SMR" id="Q2G2U1"/>
<dbReference type="STRING" id="93061.SAOUHSC_00714"/>
<dbReference type="BindingDB" id="Q2G2U1"/>
<dbReference type="ChEMBL" id="CHEMBL4295597"/>
<dbReference type="PaxDb" id="1280-SAXN108_0773"/>
<dbReference type="GeneID" id="3919341"/>
<dbReference type="KEGG" id="sao:SAOUHSC_00714"/>
<dbReference type="PATRIC" id="fig|93061.5.peg.643"/>
<dbReference type="eggNOG" id="COG5002">
    <property type="taxonomic scope" value="Bacteria"/>
</dbReference>
<dbReference type="HOGENOM" id="CLU_000445_89_3_9"/>
<dbReference type="OrthoDB" id="335833at2"/>
<dbReference type="PHI-base" id="PHI:10362"/>
<dbReference type="PHI-base" id="PHI:11422"/>
<dbReference type="PHI-base" id="PHI:4224"/>
<dbReference type="PHI-base" id="PHI:4655"/>
<dbReference type="PHI-base" id="PHI:4683"/>
<dbReference type="PHI-base" id="PHI:8075"/>
<dbReference type="PHI-base" id="PHI:8781"/>
<dbReference type="PRO" id="PR:Q2G2U1"/>
<dbReference type="Proteomes" id="UP000008816">
    <property type="component" value="Chromosome"/>
</dbReference>
<dbReference type="GO" id="GO:0005886">
    <property type="term" value="C:plasma membrane"/>
    <property type="evidence" value="ECO:0007669"/>
    <property type="project" value="UniProtKB-SubCell"/>
</dbReference>
<dbReference type="GO" id="GO:0005524">
    <property type="term" value="F:ATP binding"/>
    <property type="evidence" value="ECO:0007669"/>
    <property type="project" value="UniProtKB-KW"/>
</dbReference>
<dbReference type="GO" id="GO:0000156">
    <property type="term" value="F:phosphorelay response regulator activity"/>
    <property type="evidence" value="ECO:0000318"/>
    <property type="project" value="GO_Central"/>
</dbReference>
<dbReference type="GO" id="GO:0000155">
    <property type="term" value="F:phosphorelay sensor kinase activity"/>
    <property type="evidence" value="ECO:0007669"/>
    <property type="project" value="InterPro"/>
</dbReference>
<dbReference type="GO" id="GO:0030295">
    <property type="term" value="F:protein kinase activator activity"/>
    <property type="evidence" value="ECO:0000318"/>
    <property type="project" value="GO_Central"/>
</dbReference>
<dbReference type="GO" id="GO:0007234">
    <property type="term" value="P:osmosensory signaling via phosphorelay pathway"/>
    <property type="evidence" value="ECO:0000318"/>
    <property type="project" value="GO_Central"/>
</dbReference>
<dbReference type="CDD" id="cd00075">
    <property type="entry name" value="HATPase"/>
    <property type="match status" value="1"/>
</dbReference>
<dbReference type="CDD" id="cd00082">
    <property type="entry name" value="HisKA"/>
    <property type="match status" value="1"/>
</dbReference>
<dbReference type="FunFam" id="1.10.287.130:FF:000077">
    <property type="entry name" value="Sensor histidine kinase SaeS"/>
    <property type="match status" value="1"/>
</dbReference>
<dbReference type="Gene3D" id="1.10.287.130">
    <property type="match status" value="1"/>
</dbReference>
<dbReference type="Gene3D" id="6.10.340.10">
    <property type="match status" value="1"/>
</dbReference>
<dbReference type="Gene3D" id="3.30.565.10">
    <property type="entry name" value="Histidine kinase-like ATPase, C-terminal domain"/>
    <property type="match status" value="1"/>
</dbReference>
<dbReference type="InterPro" id="IPR050351">
    <property type="entry name" value="2-comp_sensor_kinase"/>
</dbReference>
<dbReference type="InterPro" id="IPR003660">
    <property type="entry name" value="HAMP_dom"/>
</dbReference>
<dbReference type="InterPro" id="IPR036890">
    <property type="entry name" value="HATPase_C_sf"/>
</dbReference>
<dbReference type="InterPro" id="IPR005467">
    <property type="entry name" value="His_kinase_dom"/>
</dbReference>
<dbReference type="InterPro" id="IPR003661">
    <property type="entry name" value="HisK_dim/P_dom"/>
</dbReference>
<dbReference type="InterPro" id="IPR036097">
    <property type="entry name" value="HisK_dim/P_sf"/>
</dbReference>
<dbReference type="InterPro" id="IPR004358">
    <property type="entry name" value="Sig_transdc_His_kin-like_C"/>
</dbReference>
<dbReference type="PANTHER" id="PTHR45453">
    <property type="entry name" value="PHOSPHATE REGULON SENSOR PROTEIN PHOR"/>
    <property type="match status" value="1"/>
</dbReference>
<dbReference type="PANTHER" id="PTHR45453:SF1">
    <property type="entry name" value="PHOSPHATE REGULON SENSOR PROTEIN PHOR"/>
    <property type="match status" value="1"/>
</dbReference>
<dbReference type="Pfam" id="PF00672">
    <property type="entry name" value="HAMP"/>
    <property type="match status" value="1"/>
</dbReference>
<dbReference type="Pfam" id="PF02518">
    <property type="entry name" value="HATPase_c"/>
    <property type="match status" value="1"/>
</dbReference>
<dbReference type="Pfam" id="PF00512">
    <property type="entry name" value="HisKA"/>
    <property type="match status" value="1"/>
</dbReference>
<dbReference type="PRINTS" id="PR00344">
    <property type="entry name" value="BCTRLSENSOR"/>
</dbReference>
<dbReference type="SMART" id="SM00387">
    <property type="entry name" value="HATPase_c"/>
    <property type="match status" value="1"/>
</dbReference>
<dbReference type="SMART" id="SM00388">
    <property type="entry name" value="HisKA"/>
    <property type="match status" value="1"/>
</dbReference>
<dbReference type="SUPFAM" id="SSF55874">
    <property type="entry name" value="ATPase domain of HSP90 chaperone/DNA topoisomerase II/histidine kinase"/>
    <property type="match status" value="1"/>
</dbReference>
<dbReference type="SUPFAM" id="SSF47384">
    <property type="entry name" value="Homodimeric domain of signal transducing histidine kinase"/>
    <property type="match status" value="1"/>
</dbReference>
<dbReference type="PROSITE" id="PS50885">
    <property type="entry name" value="HAMP"/>
    <property type="match status" value="1"/>
</dbReference>
<dbReference type="PROSITE" id="PS50109">
    <property type="entry name" value="HIS_KIN"/>
    <property type="match status" value="1"/>
</dbReference>
<organism>
    <name type="scientific">Staphylococcus aureus (strain NCTC 8325 / PS 47)</name>
    <dbReference type="NCBI Taxonomy" id="93061"/>
    <lineage>
        <taxon>Bacteria</taxon>
        <taxon>Bacillati</taxon>
        <taxon>Bacillota</taxon>
        <taxon>Bacilli</taxon>
        <taxon>Bacillales</taxon>
        <taxon>Staphylococcaceae</taxon>
        <taxon>Staphylococcus</taxon>
    </lineage>
</organism>
<reference key="1">
    <citation type="journal article" date="2003" name="J. Bacteriol.">
        <title>Molecular architecture of the regulatory locus sae of Staphylococcus aureus and its impact on expression of virulence factors.</title>
        <authorList>
            <person name="Steinhuber A."/>
            <person name="Goerke C."/>
            <person name="Bayer M.G."/>
            <person name="Doering G."/>
            <person name="Wolz C."/>
        </authorList>
    </citation>
    <scope>NUCLEOTIDE SEQUENCE [GENOMIC DNA]</scope>
    <scope>FUNCTION IN REGULATION OF EXOPROTEINS SYNTHESIS</scope>
</reference>
<reference key="2">
    <citation type="book" date="2006" name="Gram positive pathogens, 2nd edition">
        <title>The Staphylococcus aureus NCTC 8325 genome.</title>
        <editorList>
            <person name="Fischetti V."/>
            <person name="Novick R."/>
            <person name="Ferretti J."/>
            <person name="Portnoy D."/>
            <person name="Rood J."/>
        </editorList>
        <authorList>
            <person name="Gillaspy A.F."/>
            <person name="Worrell V."/>
            <person name="Orvis J."/>
            <person name="Roe B.A."/>
            <person name="Dyer D.W."/>
            <person name="Iandolo J.J."/>
        </authorList>
    </citation>
    <scope>NUCLEOTIDE SEQUENCE [LARGE SCALE GENOMIC DNA]</scope>
    <source>
        <strain>NCTC 8325 / PS 47</strain>
    </source>
</reference>
<reference key="3">
    <citation type="journal article" date="1994" name="Can. J. Microbiol.">
        <title>Characterization of a Tn551-mutant of Staphylococcus aureus defective in the production of several exoproteins.</title>
        <authorList>
            <person name="Giraudo A.T."/>
            <person name="Raspanti C.G."/>
            <person name="Calzolari A."/>
            <person name="Nagel R."/>
        </authorList>
    </citation>
    <scope>FUNCTION IN REGULATION OF EXOPROTEINS SYNTHESIS</scope>
</reference>
<reference key="4">
    <citation type="journal article" date="1996" name="Can. J. Microbiol.">
        <title>Phenotypic characterization and virulence of a sae- agr- mutant of Staphylococcus aureus.</title>
        <authorList>
            <person name="Giraudo A.T."/>
            <person name="Rampone H."/>
            <person name="Calzolari A."/>
            <person name="Nagel R."/>
        </authorList>
    </citation>
    <scope>FUNCTION IN REGULATION OF EXOPROTEINS SYNTHESIS</scope>
</reference>
<reference key="5">
    <citation type="journal article" date="1997" name="Arch. Microbiol.">
        <title>The sae locus of Staphylococcus aureus controls exoprotein synthesis at the transcriptional level.</title>
        <authorList>
            <person name="Giraudo A.T."/>
            <person name="Cheung A.L."/>
            <person name="Nagel R."/>
        </authorList>
    </citation>
    <scope>FUNCTION IN REGULATION OF EXOPROTEINS SYNTHESIS</scope>
</reference>
<reference key="6">
    <citation type="journal article" date="1999" name="FEMS Microbiol. Lett.">
        <title>The sae locus of Staphylococcus aureus encodes a two-component regulatory system.</title>
        <authorList>
            <person name="Giraudo A.T."/>
            <person name="Calzolari A."/>
            <person name="Cataldi A.A."/>
            <person name="Bogni C."/>
            <person name="Nagel R."/>
        </authorList>
    </citation>
    <scope>FUNCTION IN REGULATION OF EXOPROTEINS SYNTHESIS</scope>
</reference>
<reference key="7">
    <citation type="journal article" date="2001" name="Mol. Microbiol.">
        <title>Impact of the regulatory loci agr, sarA and sae of Staphylococcus aureus on the induction of alpha-toxin during device-related infection resolved by direct quantitative transcript analysis.</title>
        <authorList>
            <person name="Goerke C."/>
            <person name="Fluckiger U."/>
            <person name="Steinhuber A."/>
            <person name="Zimmerli W."/>
            <person name="Wolz C."/>
        </authorList>
    </citation>
    <scope>FUNCTION IN REGULATION OF EXOPROTEINS SYNTHESIS</scope>
</reference>
<reference key="8">
    <citation type="journal article" date="2003" name="Curr. Microbiol.">
        <title>Studies on the expression of regulatory locus sae in Staphylococcus aureus.</title>
        <authorList>
            <person name="Giraudo A.T."/>
            <person name="Mansilla C."/>
            <person name="Chan A."/>
            <person name="Raspanti C.G."/>
            <person name="Nagel R."/>
        </authorList>
    </citation>
    <scope>REGULATION BY AGR</scope>
    <scope>DEVELOPMENTAL STAGE</scope>
</reference>
<reference key="9">
    <citation type="journal article" date="2003" name="Microbiology">
        <title>The staphylococcal saeRS system coordinates environmental signals with agr quorum sensing.</title>
        <authorList>
            <person name="Novick R.P."/>
            <person name="Jiang D."/>
        </authorList>
    </citation>
    <scope>FUNCTION IN REGULATION OF EXOPROTEINS SYNTHESIS</scope>
    <scope>INDUCTION</scope>
</reference>
<reference key="10">
    <citation type="journal article" date="2004" name="J. Bacteriol.">
        <title>Large-scale identification of genes required for full virulence of Staphylococcus aureus.</title>
        <authorList>
            <person name="Benton B.M."/>
            <person name="Zhang J.P."/>
            <person name="Bond S."/>
            <person name="Pope C."/>
            <person name="Christian T."/>
            <person name="Lee L."/>
            <person name="Winterberg K.M."/>
            <person name="Schmid M.B."/>
            <person name="Buysse J.M."/>
        </authorList>
    </citation>
    <scope>VIRULENCE</scope>
</reference>
<reference key="11">
    <citation type="journal article" date="2005" name="Microbiology">
        <title>Sae is essential for expression of the staphylococcal adhesins Eap and Emp.</title>
        <authorList>
            <person name="Harraghy N."/>
            <person name="Kormanec J."/>
            <person name="Wolz C."/>
            <person name="Homerova D."/>
            <person name="Goerke C."/>
            <person name="Ohlsen K."/>
            <person name="Qazi S."/>
            <person name="Hill P."/>
            <person name="Herrmann M."/>
        </authorList>
    </citation>
    <scope>FUNCTION IN REGULATION OF ADHESIN SYNTHESIS</scope>
</reference>
<reference key="12">
    <citation type="journal article" date="2006" name="J. Infect. Dis.">
        <title>Regulation of Staphylococcus aureus alpha-toxin gene (hla) expression by agr, sarA, and sae in vitro and in experimental infective endocarditis.</title>
        <authorList>
            <person name="Xiong Y.Q."/>
            <person name="Willard J."/>
            <person name="Yeaman M.R."/>
            <person name="Cheung A.L."/>
            <person name="Bayer A.S."/>
        </authorList>
    </citation>
    <scope>FUNCTION IN REGULATION OF EXOPROTEINS SYNTHESIS</scope>
    <scope>VIRULENCE</scope>
</reference>
<feature type="chain" id="PRO_0000295937" description="Histidine protein kinase SaeS">
    <location>
        <begin position="1"/>
        <end position="351"/>
    </location>
</feature>
<feature type="transmembrane region" description="Helical" evidence="2">
    <location>
        <begin position="9"/>
        <end position="29"/>
    </location>
</feature>
<feature type="transmembrane region" description="Helical" evidence="2">
    <location>
        <begin position="40"/>
        <end position="60"/>
    </location>
</feature>
<feature type="domain" description="HAMP" evidence="3">
    <location>
        <begin position="61"/>
        <end position="114"/>
    </location>
</feature>
<feature type="domain" description="Histidine kinase" evidence="4">
    <location>
        <begin position="129"/>
        <end position="348"/>
    </location>
</feature>
<feature type="modified residue" description="Phosphohistidine; by autocatalysis" evidence="4">
    <location>
        <position position="132"/>
    </location>
</feature>
<name>SAES_STAA8</name>
<protein>
    <recommendedName>
        <fullName>Histidine protein kinase SaeS</fullName>
        <ecNumber>2.7.13.3</ecNumber>
    </recommendedName>
    <alternativeName>
        <fullName>Sensor protein SaeS</fullName>
    </alternativeName>
    <alternativeName>
        <fullName>Staphylococcus exoprotein expression protein S</fullName>
    </alternativeName>
</protein>
<sequence length="351" mass="39741">MVLSIRSQIIIGVVSSILLTSTILAIAYILMWFNGHMTLTLTLTTIITSCLTLLICSIFINPLIQKIKQFNIKTKQFANGNYASNDKTFNSPKEIYELNQSFNKMASEITQQMNQIKSEQQEKTELIQNLAHDLKTPLASIISYSEGLRDGIITKDHEIKESYDILIKQANRLSTLFDDMTHIITLNTGKTYPPELIQLDQLLVSILQPYEQRIKHENRTLEVNFCNEIDAFYQYRTPLERILTNLLDNALKFSNVGSRIDINISENEDQDTIDIAISDEGIGIIPELQERIFERTFRVENSRNTKTGGSGLGLYIANELAQQNNAKISVSSDIDVGTTMTVTLHKLDITS</sequence>
<accession>Q2G2U1</accession>
<accession>Q840P5</accession>
<proteinExistence type="evidence at protein level"/>
<keyword id="KW-0067">ATP-binding</keyword>
<keyword id="KW-1003">Cell membrane</keyword>
<keyword id="KW-0418">Kinase</keyword>
<keyword id="KW-0472">Membrane</keyword>
<keyword id="KW-0547">Nucleotide-binding</keyword>
<keyword id="KW-0597">Phosphoprotein</keyword>
<keyword id="KW-1185">Reference proteome</keyword>
<keyword id="KW-0808">Transferase</keyword>
<keyword id="KW-0812">Transmembrane</keyword>
<keyword id="KW-1133">Transmembrane helix</keyword>
<keyword id="KW-0902">Two-component regulatory system</keyword>
<keyword id="KW-0843">Virulence</keyword>
<comment type="function">
    <text evidence="5 6 8 9 10 11 12 13 14">Member of the two-component regulatory system SaeR/SaeS involved in the regulation of staphylococcal virulence factors in a strain-dependent fashion. Probably functions as a membrane-associated protein kinase that upon sensing the appropriate signal, autophosphorylates and in turn activates the cytosolic response regulator SaeR. SaeR/SaeS activates the expression of exoproteins involved in adhesion and invasion of host cells, including hemolysins (hla, hlb), coa, Dnase, spa and cell wall-associated proteins (emp, eap, fnbA). Acts probably downstream of the agr system in the regulatory cascade of virulence factors.</text>
</comment>
<comment type="catalytic activity">
    <reaction>
        <text>ATP + protein L-histidine = ADP + protein N-phospho-L-histidine.</text>
        <dbReference type="EC" id="2.7.13.3"/>
    </reaction>
</comment>
<comment type="subcellular location">
    <subcellularLocation>
        <location evidence="1">Cell membrane</location>
        <topology evidence="1">Multi-pass membrane protein</topology>
    </subcellularLocation>
</comment>
<comment type="developmental stage">
    <text evidence="7">Expressed at high levels in the late and post-exponential growth phases.</text>
</comment>
<comment type="induction">
    <text evidence="8">Transcription is affected by Agr and SarA. Also, transcriptionally repressed by NaCL, pH below 6, glucose and the antibiotic clindamycin.</text>
</comment>
<comment type="PTM">
    <text evidence="1">Autophosphorylated.</text>
</comment>
<gene>
    <name type="primary">saeS</name>
    <name type="ordered locus">SAOUHSC_00714</name>
</gene>
<evidence type="ECO:0000250" key="1"/>
<evidence type="ECO:0000255" key="2"/>
<evidence type="ECO:0000255" key="3">
    <source>
        <dbReference type="PROSITE-ProRule" id="PRU00102"/>
    </source>
</evidence>
<evidence type="ECO:0000255" key="4">
    <source>
        <dbReference type="PROSITE-ProRule" id="PRU00107"/>
    </source>
</evidence>
<evidence type="ECO:0000269" key="5">
    <source>
    </source>
</evidence>
<evidence type="ECO:0000269" key="6">
    <source>
    </source>
</evidence>
<evidence type="ECO:0000269" key="7">
    <source>
    </source>
</evidence>
<evidence type="ECO:0000269" key="8">
    <source>
    </source>
</evidence>
<evidence type="ECO:0000269" key="9">
    <source>
    </source>
</evidence>
<evidence type="ECO:0000269" key="10">
    <source>
    </source>
</evidence>
<evidence type="ECO:0000269" key="11">
    <source>
    </source>
</evidence>
<evidence type="ECO:0000269" key="12">
    <source>
    </source>
</evidence>
<evidence type="ECO:0000269" key="13">
    <source>
    </source>
</evidence>
<evidence type="ECO:0000269" key="14">
    <source>
    </source>
</evidence>